<keyword id="KW-0002">3D-structure</keyword>
<keyword id="KW-0007">Acetylation</keyword>
<keyword id="KW-0025">Alternative splicing</keyword>
<keyword id="KW-0898">Cataract</keyword>
<keyword id="KW-0131">Cell cycle</keyword>
<keyword id="KW-0132">Cell division</keyword>
<keyword id="KW-0963">Cytoplasm</keyword>
<keyword id="KW-0206">Cytoskeleton</keyword>
<keyword id="KW-0378">Hydrolase</keyword>
<keyword id="KW-0498">Mitosis</keyword>
<keyword id="KW-0622">Neuropathy</keyword>
<keyword id="KW-0539">Nucleus</keyword>
<keyword id="KW-0597">Phosphoprotein</keyword>
<keyword id="KW-0904">Protein phosphatase</keyword>
<keyword id="KW-1267">Proteomics identification</keyword>
<keyword id="KW-1185">Reference proteome</keyword>
<protein>
    <recommendedName>
        <fullName>RNA polymerase II subunit A C-terminal domain phosphatase</fullName>
        <ecNumber>3.1.3.16</ecNumber>
    </recommendedName>
    <alternativeName>
        <fullName>TFIIF-associating CTD phosphatase</fullName>
    </alternativeName>
</protein>
<comment type="function">
    <text evidence="8">Processively dephosphorylates 'Ser-2' and 'Ser-5' of the heptad repeats YSPTSPS in the C-terminal domain of the largest RNA polymerase II subunit. This promotes the activity of RNA polymerase II. Plays a role in the exit from mitosis by dephosphorylating crucial mitotic substrates (USP44, CDC20 and WEE1) that are required for M-phase-promoting factor (MPF)/CDK1 inactivation.</text>
</comment>
<comment type="catalytic activity">
    <reaction>
        <text>O-phospho-L-seryl-[protein] + H2O = L-seryl-[protein] + phosphate</text>
        <dbReference type="Rhea" id="RHEA:20629"/>
        <dbReference type="Rhea" id="RHEA-COMP:9863"/>
        <dbReference type="Rhea" id="RHEA-COMP:11604"/>
        <dbReference type="ChEBI" id="CHEBI:15377"/>
        <dbReference type="ChEBI" id="CHEBI:29999"/>
        <dbReference type="ChEBI" id="CHEBI:43474"/>
        <dbReference type="ChEBI" id="CHEBI:83421"/>
        <dbReference type="EC" id="3.1.3.16"/>
    </reaction>
</comment>
<comment type="catalytic activity">
    <reaction>
        <text>O-phospho-L-threonyl-[protein] + H2O = L-threonyl-[protein] + phosphate</text>
        <dbReference type="Rhea" id="RHEA:47004"/>
        <dbReference type="Rhea" id="RHEA-COMP:11060"/>
        <dbReference type="Rhea" id="RHEA-COMP:11605"/>
        <dbReference type="ChEBI" id="CHEBI:15377"/>
        <dbReference type="ChEBI" id="CHEBI:30013"/>
        <dbReference type="ChEBI" id="CHEBI:43474"/>
        <dbReference type="ChEBI" id="CHEBI:61977"/>
        <dbReference type="EC" id="3.1.3.16"/>
    </reaction>
</comment>
<comment type="subunit">
    <text evidence="4 6 9">Homodimer. Interacts with GTF2F1. Interacts with WDR77, SNRPB and SNRNP70.</text>
</comment>
<comment type="interaction">
    <interactant intactId="EBI-2807555">
        <id>Q9Y5B0</id>
    </interactant>
    <interactant intactId="EBI-1013291">
        <id>Q9NVI1</id>
        <label>FANCI</label>
    </interactant>
    <organismsDiffer>false</organismsDiffer>
    <experiments>3</experiments>
</comment>
<comment type="interaction">
    <interactant intactId="EBI-2807555">
        <id>Q9Y5B0</id>
    </interactant>
    <interactant intactId="EBI-457886">
        <id>P35269</id>
        <label>GTF2F1</label>
    </interactant>
    <organismsDiffer>false</organismsDiffer>
    <experiments>2</experiments>
</comment>
<comment type="subcellular location">
    <subcellularLocation>
        <location evidence="8">Nucleus</location>
    </subcellularLocation>
    <subcellularLocation>
        <location evidence="8">Cytoplasm</location>
        <location evidence="8">Cytoskeleton</location>
        <location evidence="8">Microtubule organizing center</location>
        <location evidence="8">Centrosome</location>
    </subcellularLocation>
    <subcellularLocation>
        <location evidence="8">Cytoplasm</location>
        <location evidence="8">Cytoskeleton</location>
        <location evidence="8">Spindle pole</location>
    </subcellularLocation>
    <subcellularLocation>
        <location evidence="8">Midbody</location>
    </subcellularLocation>
    <text>Found at centrosomes in prometaphase, at spindle and spindle poles in metaphase and at spindle midzone and midbody in anaphase and telophase-G1 respectively.</text>
</comment>
<comment type="alternative products">
    <event type="alternative splicing"/>
    <isoform>
        <id>Q9Y5B0-1</id>
        <name>1</name>
        <sequence type="displayed"/>
    </isoform>
    <isoform>
        <id>Q9Y5B0-4</id>
        <name>4</name>
        <sequence type="described" ref="VSP_009865"/>
    </isoform>
</comment>
<comment type="tissue specificity">
    <text evidence="9">Ubiquitously expressed.</text>
</comment>
<comment type="PTM">
    <text evidence="5">Phosphorylated. In the presence of TFIIF, the phosphorylated form has an increased CTD phosphatase activity. The phosphorylation is required for the physical interaction with GTF2F1.</text>
</comment>
<comment type="disease" evidence="7">
    <disease id="DI-01390">
        <name>Congenital cataracts, facial dysmorphism, and neuropathy</name>
        <acronym>CCFDN</acronym>
        <description>An autosomal recessive developmental disorder characterized by a complex clinical phenotype with seemingly unrelated features involving multiple organs and systems. Developmental abnormalities include congenital cataracts and microcorneae, hypomyelination of the peripheral nervous system, impaired physical growth, delayed early motor and intellectual development, facial dysmorphism and hypogonadism. Central nervous system involvement, with cerebral and spinal cord atrophy, may be the result of disrupted development with superimposed degenerative changes. Affected individuals are prone to severe rhabdomyolysis after viral infections and to serious complications related to general anesthesia (such as pulmonary edema and epileptic seizures).</description>
        <dbReference type="MIM" id="604168"/>
    </disease>
    <text>The disease is caused by variants affecting the gene represented in this entry.</text>
</comment>
<comment type="sequence caution" evidence="12">
    <conflict type="miscellaneous discrepancy">
        <sequence resource="EMBL-CDS" id="AAC64549"/>
    </conflict>
    <text>Cloning artifact.</text>
</comment>
<sequence length="961" mass="104399">MEVPAAGRVPAEGAPTAAVAEVRCPGPAPLRLLEWRVAAGAAVRIGSVLAVFEAAASAQSSGASQSRVASGGCVRPARPERRLRSERAGVVRELCAQPGQVVAPGAVLVRLEGCSHPVVMKGLCAECGQDLTQLQSKNGKQQVPLSTATVSMVHSVPELMVSSEQAEQLGREDQQRLHRNRKLVLMVDLDQTLIHTTEQHCQQMSNKGIFHFQLGRGEPMLHTRLRPHCKDFLEKIAKLYELHVFTFGSRLYAHTIAGFLDPEKKLFSHRILSRDECIDPFSKTGNLRNLFPCGDSMVCIIDDREDVWKFAPNLITVKKYVYFQGTGDMNAPPGSRESQTRKKVNHSRGTEVSEPSPPVRDPEGVTQAPGVEPSNGLEKPARELNGSEAATPRDSPRPGKPDERDIWPPAQAPTSSQELAGAPEPQGSCAQGGRVAPGQRPAQGATGTDLDFDLSSDSESSSESEGTKSSSSASDGESEGKRGRQKPKAAPEGAGALAQGSSLEPGRPAAPSLPGEAEPGAHAPDKEPELGGQEEGERDGLCGLGNGCADRKEAETESQNSELSGVTAGESLDQSMEEEEEEDTDEDDHLIYLEEILVRVHTDYYAKYDRYLNKEIEEAPDIRKIVPELKSKVLADVAIIFSGLHPTNFPIEKTREHYHATALGAKILTRLVLSPDAPDRATHLIAARAGTEKVLQAQECGHLHVVNPDWLWSCLERWDKVEEQLFPLRDDHTKAQRENSPAAFPDREGVPPTALFHPMPVLPKAQPGPEVRIYDSNTGKLIRTGARGPPAPSSSLPIRQEPSSFRAVPPPQPQMFGEELPDAQDGEQPGPSRRKRQPSMSETMPLYTLCKEDLESMDKEVDDILGEGSDDSDSEKRRPEEQEEEPQPRKPGTRRERTLGAPASSERSAAGGRGPRGHKRKLNEEDAASESSRESSNEDEGSSSEADEMAKALEAELNDLM</sequence>
<feature type="chain" id="PRO_0000212564" description="RNA polymerase II subunit A C-terminal domain phosphatase">
    <location>
        <begin position="1"/>
        <end position="961"/>
    </location>
</feature>
<feature type="domain" description="FCP1 homology" evidence="2">
    <location>
        <begin position="178"/>
        <end position="344"/>
    </location>
</feature>
<feature type="domain" description="BRCT" evidence="1">
    <location>
        <begin position="629"/>
        <end position="728"/>
    </location>
</feature>
<feature type="region of interest" description="Disordered" evidence="3">
    <location>
        <begin position="328"/>
        <end position="589"/>
    </location>
</feature>
<feature type="region of interest" description="Disordered" evidence="3">
    <location>
        <begin position="730"/>
        <end position="752"/>
    </location>
</feature>
<feature type="region of interest" description="Disordered" evidence="3">
    <location>
        <begin position="780"/>
        <end position="949"/>
    </location>
</feature>
<feature type="compositionally biased region" description="Basic and acidic residues" evidence="3">
    <location>
        <begin position="394"/>
        <end position="406"/>
    </location>
</feature>
<feature type="compositionally biased region" description="Acidic residues" evidence="3">
    <location>
        <begin position="450"/>
        <end position="462"/>
    </location>
</feature>
<feature type="compositionally biased region" description="Low complexity" evidence="3">
    <location>
        <begin position="463"/>
        <end position="475"/>
    </location>
</feature>
<feature type="compositionally biased region" description="Acidic residues" evidence="3">
    <location>
        <begin position="575"/>
        <end position="588"/>
    </location>
</feature>
<feature type="compositionally biased region" description="Polar residues" evidence="3">
    <location>
        <begin position="793"/>
        <end position="803"/>
    </location>
</feature>
<feature type="compositionally biased region" description="Basic and acidic residues" evidence="3">
    <location>
        <begin position="850"/>
        <end position="859"/>
    </location>
</feature>
<feature type="compositionally biased region" description="Acidic residues" evidence="3">
    <location>
        <begin position="860"/>
        <end position="873"/>
    </location>
</feature>
<feature type="compositionally biased region" description="Acidic residues" evidence="3">
    <location>
        <begin position="937"/>
        <end position="947"/>
    </location>
</feature>
<feature type="modified residue" description="N-acetylmethionine" evidence="17">
    <location>
        <position position="1"/>
    </location>
</feature>
<feature type="modified residue" description="Phosphoserine" evidence="18">
    <location>
        <position position="395"/>
    </location>
</feature>
<feature type="modified residue" description="Phosphoserine" evidence="15 18">
    <location>
        <position position="674"/>
    </location>
</feature>
<feature type="modified residue" description="Phosphoserine" evidence="18">
    <location>
        <position position="740"/>
    </location>
</feature>
<feature type="modified residue" description="N6-acetyllysine" evidence="14">
    <location>
        <position position="780"/>
    </location>
</feature>
<feature type="modified residue" description="Phosphoserine" evidence="18">
    <location>
        <position position="839"/>
    </location>
</feature>
<feature type="modified residue" description="Phosphoserine" evidence="13 15">
    <location>
        <position position="869"/>
    </location>
</feature>
<feature type="modified residue" description="Phosphoserine" evidence="15 16">
    <location>
        <position position="872"/>
    </location>
</feature>
<feature type="splice variant" id="VSP_009865" description="In isoform 4." evidence="10 11">
    <original>AVPPPQPQMFGEELPDAQDGEQPGPSRRKRQPSMSETMPLYTLCKEDLESMDKEVDDILGEGSDDSDSEKRRPEEQEEEPQPRKPGTRRERTLGAPASSERSAAGGRGPRGHKRKLNEEDAASESSRESSNEDEGSSSEADEMAKALEAELNDLM</original>
    <variation>WTTSLEKAATTATARRGGLRSRRRSPSPGSQGPAGSGRSGHLRPARGARQGAGGPEATRGS</variation>
    <location>
        <begin position="807"/>
        <end position="961"/>
    </location>
</feature>
<feature type="sequence variant" id="VAR_060440" description="In dbSNP:rs4799078.">
    <original>S</original>
    <variation>F</variation>
    <location>
        <position position="282"/>
    </location>
</feature>
<feature type="sequence variant" id="VAR_018264" description="In dbSNP:rs2279103.">
    <original>T</original>
    <variation>M</variation>
    <location>
        <position position="340"/>
    </location>
</feature>
<feature type="sequence variant" id="VAR_060441" description="In dbSNP:rs557503.">
    <original>P</original>
    <variation>H</variation>
    <location>
        <position position="519"/>
    </location>
</feature>
<feature type="sequence variant" id="VAR_032763" description="In dbSNP:rs34967023.">
    <original>L</original>
    <variation>S</variation>
    <location>
        <position position="755"/>
    </location>
</feature>
<feature type="sequence conflict" description="In Ref. 1; AAD42088 and 4; AAH63447." evidence="12" ref="1 4">
    <original>S</original>
    <variation>A</variation>
    <location>
        <position position="61"/>
    </location>
</feature>
<feature type="sequence conflict" description="In Ref. 5; AAC64549." evidence="12" ref="5">
    <original>P</original>
    <variation>A</variation>
    <location>
        <position position="157"/>
    </location>
</feature>
<feature type="sequence conflict" description="In Ref. 4; AAH52576." evidence="12" ref="4">
    <original>F</original>
    <variation>I</variation>
    <location>
        <position position="281"/>
    </location>
</feature>
<feature type="sequence conflict" description="In Ref. 1; AAD42088." evidence="12" ref="1">
    <original>E</original>
    <variation>K</variation>
    <location>
        <position position="305"/>
    </location>
</feature>
<feature type="sequence conflict" description="In Ref. 5; AAC64549." evidence="12" ref="5">
    <original>A</original>
    <variation>P</variation>
    <location>
        <position position="390"/>
    </location>
</feature>
<feature type="sequence conflict" description="In Ref. 5; AAC64549." evidence="12" ref="5">
    <original>S</original>
    <variation>T</variation>
    <location>
        <position position="478"/>
    </location>
</feature>
<feature type="sequence conflict" description="In Ref. 5; AAC64549." evidence="12" ref="5">
    <original>KP</original>
    <variation>NA</variation>
    <location>
        <begin position="486"/>
        <end position="487"/>
    </location>
</feature>
<feature type="sequence conflict" description="In Ref. 5; AAC64549." evidence="12" ref="5">
    <original>EP</original>
    <variation>DA</variation>
    <location>
        <begin position="504"/>
        <end position="505"/>
    </location>
</feature>
<feature type="sequence conflict" description="In Ref. 5; AAC64549." evidence="12" ref="5">
    <original>L</original>
    <variation>V</variation>
    <location>
        <position position="513"/>
    </location>
</feature>
<feature type="sequence conflict" description="In Ref. 5; AAC64549." evidence="12" ref="5">
    <original>EH</original>
    <variation>DD</variation>
    <location>
        <begin position="656"/>
        <end position="657"/>
    </location>
</feature>
<feature type="sequence conflict" description="In Ref. 1; AAD42088." evidence="12" ref="1">
    <original>ERTLG</original>
    <variation>GADAR</variation>
    <location>
        <begin position="896"/>
        <end position="900"/>
    </location>
</feature>
<feature type="helix" evidence="20">
    <location>
        <begin position="586"/>
        <end position="598"/>
    </location>
</feature>
<feature type="helix" evidence="19">
    <location>
        <begin position="945"/>
        <end position="956"/>
    </location>
</feature>
<feature type="turn" evidence="19">
    <location>
        <begin position="957"/>
        <end position="959"/>
    </location>
</feature>
<gene>
    <name type="primary">CTDP1</name>
    <name type="synonym">FCP1</name>
</gene>
<accession>Q9Y5B0</accession>
<accession>A8MY97</accession>
<accession>Q7Z644</accession>
<accession>Q96BZ1</accession>
<accession>Q9Y6F5</accession>
<organism>
    <name type="scientific">Homo sapiens</name>
    <name type="common">Human</name>
    <dbReference type="NCBI Taxonomy" id="9606"/>
    <lineage>
        <taxon>Eukaryota</taxon>
        <taxon>Metazoa</taxon>
        <taxon>Chordata</taxon>
        <taxon>Craniata</taxon>
        <taxon>Vertebrata</taxon>
        <taxon>Euteleostomi</taxon>
        <taxon>Mammalia</taxon>
        <taxon>Eutheria</taxon>
        <taxon>Euarchontoglires</taxon>
        <taxon>Primates</taxon>
        <taxon>Haplorrhini</taxon>
        <taxon>Catarrhini</taxon>
        <taxon>Hominidae</taxon>
        <taxon>Homo</taxon>
    </lineage>
</organism>
<proteinExistence type="evidence at protein level"/>
<dbReference type="EC" id="3.1.3.16"/>
<dbReference type="EMBL" id="AF154115">
    <property type="protein sequence ID" value="AAD42088.1"/>
    <property type="molecule type" value="mRNA"/>
</dbReference>
<dbReference type="EMBL" id="AC021594">
    <property type="status" value="NOT_ANNOTATED_CDS"/>
    <property type="molecule type" value="Genomic_DNA"/>
</dbReference>
<dbReference type="EMBL" id="AC068473">
    <property type="status" value="NOT_ANNOTATED_CDS"/>
    <property type="molecule type" value="Genomic_DNA"/>
</dbReference>
<dbReference type="EMBL" id="CH471117">
    <property type="protein sequence ID" value="EAW66631.1"/>
    <property type="molecule type" value="Genomic_DNA"/>
</dbReference>
<dbReference type="EMBL" id="BC015010">
    <property type="protein sequence ID" value="AAH15010.1"/>
    <property type="molecule type" value="mRNA"/>
</dbReference>
<dbReference type="EMBL" id="BC052576">
    <property type="protein sequence ID" value="AAH52576.1"/>
    <property type="molecule type" value="mRNA"/>
</dbReference>
<dbReference type="EMBL" id="BC063447">
    <property type="protein sequence ID" value="AAH63447.1"/>
    <property type="molecule type" value="mRNA"/>
</dbReference>
<dbReference type="EMBL" id="AF081287">
    <property type="protein sequence ID" value="AAC64549.1"/>
    <property type="status" value="ALT_SEQ"/>
    <property type="molecule type" value="mRNA"/>
</dbReference>
<dbReference type="CCDS" id="CCDS12017.1">
    <molecule id="Q9Y5B0-1"/>
</dbReference>
<dbReference type="CCDS" id="CCDS12018.1">
    <molecule id="Q9Y5B0-4"/>
</dbReference>
<dbReference type="RefSeq" id="NP_001189433.1">
    <property type="nucleotide sequence ID" value="NM_001202504.1"/>
</dbReference>
<dbReference type="RefSeq" id="NP_004706.3">
    <molecule id="Q9Y5B0-1"/>
    <property type="nucleotide sequence ID" value="NM_004715.4"/>
</dbReference>
<dbReference type="RefSeq" id="NP_430255.2">
    <molecule id="Q9Y5B0-4"/>
    <property type="nucleotide sequence ID" value="NM_048368.4"/>
</dbReference>
<dbReference type="PDB" id="1J2X">
    <property type="method" value="X-ray"/>
    <property type="resolution" value="2.00 A"/>
    <property type="chains" value="B=944-961"/>
</dbReference>
<dbReference type="PDB" id="1ONV">
    <property type="method" value="NMR"/>
    <property type="chains" value="B=879-961"/>
</dbReference>
<dbReference type="PDB" id="2K7L">
    <property type="method" value="NMR"/>
    <property type="chains" value="B=582-600"/>
</dbReference>
<dbReference type="PDBsum" id="1J2X"/>
<dbReference type="PDBsum" id="1ONV"/>
<dbReference type="PDBsum" id="2K7L"/>
<dbReference type="BMRB" id="Q9Y5B0"/>
<dbReference type="SMR" id="Q9Y5B0"/>
<dbReference type="BioGRID" id="114597">
    <property type="interactions" value="205"/>
</dbReference>
<dbReference type="CORUM" id="Q9Y5B0"/>
<dbReference type="DIP" id="DIP-41788N"/>
<dbReference type="FunCoup" id="Q9Y5B0">
    <property type="interactions" value="1877"/>
</dbReference>
<dbReference type="IntAct" id="Q9Y5B0">
    <property type="interactions" value="138"/>
</dbReference>
<dbReference type="MINT" id="Q9Y5B0"/>
<dbReference type="STRING" id="9606.ENSP00000484525"/>
<dbReference type="DEPOD" id="CTDP1"/>
<dbReference type="GlyGen" id="Q9Y5B0">
    <property type="glycosylation" value="2 sites, 1 N-linked glycan (1 site), 1 O-linked glycan (1 site)"/>
</dbReference>
<dbReference type="iPTMnet" id="Q9Y5B0"/>
<dbReference type="MetOSite" id="Q9Y5B0"/>
<dbReference type="PhosphoSitePlus" id="Q9Y5B0"/>
<dbReference type="BioMuta" id="CTDP1"/>
<dbReference type="DMDM" id="327478586"/>
<dbReference type="jPOST" id="Q9Y5B0"/>
<dbReference type="MassIVE" id="Q9Y5B0"/>
<dbReference type="PaxDb" id="9606-ENSP00000484525"/>
<dbReference type="PeptideAtlas" id="Q9Y5B0"/>
<dbReference type="ProteomicsDB" id="86328">
    <molecule id="Q9Y5B0-1"/>
</dbReference>
<dbReference type="ProteomicsDB" id="86331">
    <molecule id="Q9Y5B0-4"/>
</dbReference>
<dbReference type="Pumba" id="Q9Y5B0"/>
<dbReference type="Antibodypedia" id="23481">
    <property type="antibodies" value="145 antibodies from 23 providers"/>
</dbReference>
<dbReference type="DNASU" id="9150"/>
<dbReference type="Ensembl" id="ENST00000075430.11">
    <molecule id="Q9Y5B0-4"/>
    <property type="protein sequence ID" value="ENSP00000075430.7"/>
    <property type="gene ID" value="ENSG00000060069.18"/>
</dbReference>
<dbReference type="Ensembl" id="ENST00000613122.5">
    <molecule id="Q9Y5B0-1"/>
    <property type="protein sequence ID" value="ENSP00000484525.2"/>
    <property type="gene ID" value="ENSG00000060069.18"/>
</dbReference>
<dbReference type="GeneID" id="9150"/>
<dbReference type="KEGG" id="hsa:9150"/>
<dbReference type="MANE-Select" id="ENST00000613122.5">
    <property type="protein sequence ID" value="ENSP00000484525.2"/>
    <property type="RefSeq nucleotide sequence ID" value="NM_004715.5"/>
    <property type="RefSeq protein sequence ID" value="NP_004706.3"/>
</dbReference>
<dbReference type="UCSC" id="uc002lnh.3">
    <molecule id="Q9Y5B0-1"/>
    <property type="organism name" value="human"/>
</dbReference>
<dbReference type="AGR" id="HGNC:2498"/>
<dbReference type="CTD" id="9150"/>
<dbReference type="DisGeNET" id="9150"/>
<dbReference type="GeneCards" id="CTDP1"/>
<dbReference type="GeneReviews" id="CTDP1"/>
<dbReference type="HGNC" id="HGNC:2498">
    <property type="gene designation" value="CTDP1"/>
</dbReference>
<dbReference type="HPA" id="ENSG00000060069">
    <property type="expression patterns" value="Low tissue specificity"/>
</dbReference>
<dbReference type="MalaCards" id="CTDP1"/>
<dbReference type="MIM" id="604168">
    <property type="type" value="phenotype"/>
</dbReference>
<dbReference type="MIM" id="604927">
    <property type="type" value="gene"/>
</dbReference>
<dbReference type="neXtProt" id="NX_Q9Y5B0"/>
<dbReference type="OpenTargets" id="ENSG00000060069"/>
<dbReference type="Orphanet" id="48431">
    <property type="disease" value="Congenital cataracts-facial dysmorphism-neuropathy syndrome"/>
</dbReference>
<dbReference type="PharmGKB" id="PA27001"/>
<dbReference type="VEuPathDB" id="HostDB:ENSG00000060069"/>
<dbReference type="eggNOG" id="KOG0323">
    <property type="taxonomic scope" value="Eukaryota"/>
</dbReference>
<dbReference type="GeneTree" id="ENSGT00390000015641"/>
<dbReference type="InParanoid" id="Q9Y5B0"/>
<dbReference type="OMA" id="FMDTINP"/>
<dbReference type="OrthoDB" id="10249888at2759"/>
<dbReference type="PAN-GO" id="Q9Y5B0">
    <property type="GO annotations" value="2 GO annotations based on evolutionary models"/>
</dbReference>
<dbReference type="PhylomeDB" id="Q9Y5B0"/>
<dbReference type="TreeFam" id="TF315104"/>
<dbReference type="PathwayCommons" id="Q9Y5B0"/>
<dbReference type="Reactome" id="R-HSA-112382">
    <property type="pathway name" value="Formation of RNA Pol II elongation complex"/>
</dbReference>
<dbReference type="Reactome" id="R-HSA-113418">
    <property type="pathway name" value="Formation of the Early Elongation Complex"/>
</dbReference>
<dbReference type="Reactome" id="R-HSA-167152">
    <property type="pathway name" value="Formation of HIV elongation complex in the absence of HIV Tat"/>
</dbReference>
<dbReference type="Reactome" id="R-HSA-167158">
    <property type="pathway name" value="Formation of the HIV-1 Early Elongation Complex"/>
</dbReference>
<dbReference type="Reactome" id="R-HSA-167200">
    <property type="pathway name" value="Formation of HIV-1 elongation complex containing HIV-1 Tat"/>
</dbReference>
<dbReference type="Reactome" id="R-HSA-167238">
    <property type="pathway name" value="Pausing and recovery of Tat-mediated HIV elongation"/>
</dbReference>
<dbReference type="Reactome" id="R-HSA-167242">
    <property type="pathway name" value="Abortive elongation of HIV-1 transcript in the absence of Tat"/>
</dbReference>
<dbReference type="Reactome" id="R-HSA-167243">
    <property type="pathway name" value="Tat-mediated HIV elongation arrest and recovery"/>
</dbReference>
<dbReference type="Reactome" id="R-HSA-167246">
    <property type="pathway name" value="Tat-mediated elongation of the HIV-1 transcript"/>
</dbReference>
<dbReference type="Reactome" id="R-HSA-167287">
    <property type="pathway name" value="HIV elongation arrest and recovery"/>
</dbReference>
<dbReference type="Reactome" id="R-HSA-167290">
    <property type="pathway name" value="Pausing and recovery of HIV elongation"/>
</dbReference>
<dbReference type="Reactome" id="R-HSA-674695">
    <property type="pathway name" value="RNA Polymerase II Pre-transcription Events"/>
</dbReference>
<dbReference type="Reactome" id="R-HSA-6796648">
    <property type="pathway name" value="TP53 Regulates Transcription of DNA Repair Genes"/>
</dbReference>
<dbReference type="Reactome" id="R-HSA-75955">
    <property type="pathway name" value="RNA Polymerase II Transcription Elongation"/>
</dbReference>
<dbReference type="SignaLink" id="Q9Y5B0"/>
<dbReference type="SIGNOR" id="Q9Y5B0"/>
<dbReference type="BioGRID-ORCS" id="9150">
    <property type="hits" value="831 hits in 1158 CRISPR screens"/>
</dbReference>
<dbReference type="ChiTaRS" id="CTDP1">
    <property type="organism name" value="human"/>
</dbReference>
<dbReference type="EvolutionaryTrace" id="Q9Y5B0"/>
<dbReference type="GeneWiki" id="CTDP1"/>
<dbReference type="GenomeRNAi" id="9150"/>
<dbReference type="Pharos" id="Q9Y5B0">
    <property type="development level" value="Tbio"/>
</dbReference>
<dbReference type="PRO" id="PR:Q9Y5B0"/>
<dbReference type="Proteomes" id="UP000005640">
    <property type="component" value="Chromosome 18"/>
</dbReference>
<dbReference type="RNAct" id="Q9Y5B0">
    <property type="molecule type" value="protein"/>
</dbReference>
<dbReference type="Bgee" id="ENSG00000060069">
    <property type="expression patterns" value="Expressed in left testis and 147 other cell types or tissues"/>
</dbReference>
<dbReference type="ExpressionAtlas" id="Q9Y5B0">
    <property type="expression patterns" value="baseline and differential"/>
</dbReference>
<dbReference type="GO" id="GO:0005813">
    <property type="term" value="C:centrosome"/>
    <property type="evidence" value="ECO:0000314"/>
    <property type="project" value="UniProtKB"/>
</dbReference>
<dbReference type="GO" id="GO:0005737">
    <property type="term" value="C:cytoplasm"/>
    <property type="evidence" value="ECO:0007669"/>
    <property type="project" value="UniProtKB-KW"/>
</dbReference>
<dbReference type="GO" id="GO:0043231">
    <property type="term" value="C:intracellular membrane-bounded organelle"/>
    <property type="evidence" value="ECO:0000314"/>
    <property type="project" value="HPA"/>
</dbReference>
<dbReference type="GO" id="GO:0030496">
    <property type="term" value="C:midbody"/>
    <property type="evidence" value="ECO:0000314"/>
    <property type="project" value="UniProtKB"/>
</dbReference>
<dbReference type="GO" id="GO:0005654">
    <property type="term" value="C:nucleoplasm"/>
    <property type="evidence" value="ECO:0000314"/>
    <property type="project" value="HPA"/>
</dbReference>
<dbReference type="GO" id="GO:0005634">
    <property type="term" value="C:nucleus"/>
    <property type="evidence" value="ECO:0000314"/>
    <property type="project" value="CAFA"/>
</dbReference>
<dbReference type="GO" id="GO:0032991">
    <property type="term" value="C:protein-containing complex"/>
    <property type="evidence" value="ECO:0000315"/>
    <property type="project" value="CAFA"/>
</dbReference>
<dbReference type="GO" id="GO:0005819">
    <property type="term" value="C:spindle"/>
    <property type="evidence" value="ECO:0000314"/>
    <property type="project" value="UniProtKB"/>
</dbReference>
<dbReference type="GO" id="GO:0051233">
    <property type="term" value="C:spindle midzone"/>
    <property type="evidence" value="ECO:0000314"/>
    <property type="project" value="UniProtKB"/>
</dbReference>
<dbReference type="GO" id="GO:0000922">
    <property type="term" value="C:spindle pole"/>
    <property type="evidence" value="ECO:0000314"/>
    <property type="project" value="UniProtKB"/>
</dbReference>
<dbReference type="GO" id="GO:0004721">
    <property type="term" value="F:phosphoprotein phosphatase activity"/>
    <property type="evidence" value="ECO:0000304"/>
    <property type="project" value="Reactome"/>
</dbReference>
<dbReference type="GO" id="GO:0008420">
    <property type="term" value="F:RNA polymerase II CTD heptapeptide repeat phosphatase activity"/>
    <property type="evidence" value="ECO:0000314"/>
    <property type="project" value="UniProtKB"/>
</dbReference>
<dbReference type="GO" id="GO:0030957">
    <property type="term" value="F:Tat protein binding"/>
    <property type="evidence" value="ECO:0000353"/>
    <property type="project" value="CAFA"/>
</dbReference>
<dbReference type="GO" id="GO:0001096">
    <property type="term" value="F:TFIIF-class transcription factor complex binding"/>
    <property type="evidence" value="ECO:0000353"/>
    <property type="project" value="CAFA"/>
</dbReference>
<dbReference type="GO" id="GO:0051301">
    <property type="term" value="P:cell division"/>
    <property type="evidence" value="ECO:0007669"/>
    <property type="project" value="UniProtKB-KW"/>
</dbReference>
<dbReference type="GO" id="GO:0010458">
    <property type="term" value="P:exit from mitosis"/>
    <property type="evidence" value="ECO:0000315"/>
    <property type="project" value="UniProtKB"/>
</dbReference>
<dbReference type="GO" id="GO:0061052">
    <property type="term" value="P:negative regulation of cell growth involved in cardiac muscle cell development"/>
    <property type="evidence" value="ECO:0007669"/>
    <property type="project" value="Ensembl"/>
</dbReference>
<dbReference type="GO" id="GO:0043923">
    <property type="term" value="P:positive regulation by host of viral transcription"/>
    <property type="evidence" value="ECO:0000314"/>
    <property type="project" value="CAFA"/>
</dbReference>
<dbReference type="GO" id="GO:0006470">
    <property type="term" value="P:protein dephosphorylation"/>
    <property type="evidence" value="ECO:0000314"/>
    <property type="project" value="UniProtKB"/>
</dbReference>
<dbReference type="GO" id="GO:0006368">
    <property type="term" value="P:transcription elongation by RNA polymerase II"/>
    <property type="evidence" value="ECO:0000304"/>
    <property type="project" value="Reactome"/>
</dbReference>
<dbReference type="CDD" id="cd17729">
    <property type="entry name" value="BRCT_CTDP1"/>
    <property type="match status" value="1"/>
</dbReference>
<dbReference type="CDD" id="cd07521">
    <property type="entry name" value="HAD_FCP1-like"/>
    <property type="match status" value="1"/>
</dbReference>
<dbReference type="DisProt" id="DP00177"/>
<dbReference type="FunFam" id="1.10.287.10:FF:000010">
    <property type="entry name" value="RNA polymerase II subunit A C-terminal domain phosphatase"/>
    <property type="match status" value="1"/>
</dbReference>
<dbReference type="FunFam" id="2.40.50.100:FF:000046">
    <property type="entry name" value="RNA polymerase II subunit A C-terminal domain phosphatase"/>
    <property type="match status" value="1"/>
</dbReference>
<dbReference type="FunFam" id="3.40.50.1000:FF:000040">
    <property type="entry name" value="RNA polymerase II subunit A C-terminal domain phosphatase"/>
    <property type="match status" value="1"/>
</dbReference>
<dbReference type="FunFam" id="3.40.50.10190:FF:000007">
    <property type="entry name" value="RNA polymerase II subunit A C-terminal domain phosphatase"/>
    <property type="match status" value="1"/>
</dbReference>
<dbReference type="Gene3D" id="2.40.50.100">
    <property type="match status" value="1"/>
</dbReference>
<dbReference type="Gene3D" id="3.40.50.10190">
    <property type="entry name" value="BRCT domain"/>
    <property type="match status" value="1"/>
</dbReference>
<dbReference type="Gene3D" id="3.40.50.1000">
    <property type="entry name" value="HAD superfamily/HAD-like"/>
    <property type="match status" value="1"/>
</dbReference>
<dbReference type="Gene3D" id="1.10.287.10">
    <property type="entry name" value="S15/NS1, RNA-binding"/>
    <property type="match status" value="1"/>
</dbReference>
<dbReference type="IDEAL" id="IID00117"/>
<dbReference type="InterPro" id="IPR001357">
    <property type="entry name" value="BRCT_dom"/>
</dbReference>
<dbReference type="InterPro" id="IPR036420">
    <property type="entry name" value="BRCT_dom_sf"/>
</dbReference>
<dbReference type="InterPro" id="IPR039189">
    <property type="entry name" value="Fcp1"/>
</dbReference>
<dbReference type="InterPro" id="IPR015388">
    <property type="entry name" value="FCP1_C"/>
</dbReference>
<dbReference type="InterPro" id="IPR004274">
    <property type="entry name" value="FCP1_dom"/>
</dbReference>
<dbReference type="InterPro" id="IPR011947">
    <property type="entry name" value="FCP1_euk"/>
</dbReference>
<dbReference type="InterPro" id="IPR036412">
    <property type="entry name" value="HAD-like_sf"/>
</dbReference>
<dbReference type="InterPro" id="IPR023214">
    <property type="entry name" value="HAD_sf"/>
</dbReference>
<dbReference type="NCBIfam" id="TIGR02250">
    <property type="entry name" value="FCP1_euk"/>
    <property type="match status" value="1"/>
</dbReference>
<dbReference type="PANTHER" id="PTHR23081">
    <property type="entry name" value="RNA POLYMERASE II CTD PHOSPHATASE"/>
    <property type="match status" value="1"/>
</dbReference>
<dbReference type="PANTHER" id="PTHR23081:SF36">
    <property type="entry name" value="RNA POLYMERASE II SUBUNIT A C-TERMINAL DOMAIN PHOSPHATASE"/>
    <property type="match status" value="1"/>
</dbReference>
<dbReference type="Pfam" id="PF00533">
    <property type="entry name" value="BRCT"/>
    <property type="match status" value="1"/>
</dbReference>
<dbReference type="Pfam" id="PF09309">
    <property type="entry name" value="FCP1_C"/>
    <property type="match status" value="1"/>
</dbReference>
<dbReference type="Pfam" id="PF03031">
    <property type="entry name" value="NIF"/>
    <property type="match status" value="1"/>
</dbReference>
<dbReference type="SMART" id="SM00292">
    <property type="entry name" value="BRCT"/>
    <property type="match status" value="1"/>
</dbReference>
<dbReference type="SMART" id="SM00577">
    <property type="entry name" value="CPDc"/>
    <property type="match status" value="1"/>
</dbReference>
<dbReference type="SUPFAM" id="SSF52113">
    <property type="entry name" value="BRCT domain"/>
    <property type="match status" value="1"/>
</dbReference>
<dbReference type="SUPFAM" id="SSF56784">
    <property type="entry name" value="HAD-like"/>
    <property type="match status" value="1"/>
</dbReference>
<dbReference type="PROSITE" id="PS50172">
    <property type="entry name" value="BRCT"/>
    <property type="match status" value="1"/>
</dbReference>
<dbReference type="PROSITE" id="PS50969">
    <property type="entry name" value="FCP1"/>
    <property type="match status" value="1"/>
</dbReference>
<name>CTDP1_HUMAN</name>
<evidence type="ECO:0000255" key="1">
    <source>
        <dbReference type="PROSITE-ProRule" id="PRU00033"/>
    </source>
</evidence>
<evidence type="ECO:0000255" key="2">
    <source>
        <dbReference type="PROSITE-ProRule" id="PRU00336"/>
    </source>
</evidence>
<evidence type="ECO:0000256" key="3">
    <source>
        <dbReference type="SAM" id="MobiDB-lite"/>
    </source>
</evidence>
<evidence type="ECO:0000269" key="4">
    <source>
    </source>
</evidence>
<evidence type="ECO:0000269" key="5">
    <source>
    </source>
</evidence>
<evidence type="ECO:0000269" key="6">
    <source>
    </source>
</evidence>
<evidence type="ECO:0000269" key="7">
    <source>
    </source>
</evidence>
<evidence type="ECO:0000269" key="8">
    <source>
    </source>
</evidence>
<evidence type="ECO:0000269" key="9">
    <source>
    </source>
</evidence>
<evidence type="ECO:0000303" key="10">
    <source>
    </source>
</evidence>
<evidence type="ECO:0000303" key="11">
    <source>
    </source>
</evidence>
<evidence type="ECO:0000305" key="12"/>
<evidence type="ECO:0007744" key="13">
    <source>
    </source>
</evidence>
<evidence type="ECO:0007744" key="14">
    <source>
    </source>
</evidence>
<evidence type="ECO:0007744" key="15">
    <source>
    </source>
</evidence>
<evidence type="ECO:0007744" key="16">
    <source>
    </source>
</evidence>
<evidence type="ECO:0007744" key="17">
    <source>
    </source>
</evidence>
<evidence type="ECO:0007744" key="18">
    <source>
    </source>
</evidence>
<evidence type="ECO:0007829" key="19">
    <source>
        <dbReference type="PDB" id="1J2X"/>
    </source>
</evidence>
<evidence type="ECO:0007829" key="20">
    <source>
        <dbReference type="PDB" id="2K7L"/>
    </source>
</evidence>
<reference key="1">
    <citation type="journal article" date="1999" name="Genes Dev.">
        <title>A protein phosphatase functions to recycle RNA polymerase II.</title>
        <authorList>
            <person name="Cho H."/>
            <person name="Kim T.-K."/>
            <person name="Mancebo H."/>
            <person name="Lane W.S."/>
            <person name="Flores O."/>
            <person name="Reinberg D."/>
        </authorList>
    </citation>
    <scope>NUCLEOTIDE SEQUENCE [MRNA] (ISOFORM 1)</scope>
    <source>
        <tissue>Cervix carcinoma</tissue>
    </source>
</reference>
<reference key="2">
    <citation type="journal article" date="2005" name="Nature">
        <title>DNA sequence and analysis of human chromosome 18.</title>
        <authorList>
            <person name="Nusbaum C."/>
            <person name="Zody M.C."/>
            <person name="Borowsky M.L."/>
            <person name="Kamal M."/>
            <person name="Kodira C.D."/>
            <person name="Taylor T.D."/>
            <person name="Whittaker C.A."/>
            <person name="Chang J.L."/>
            <person name="Cuomo C.A."/>
            <person name="Dewar K."/>
            <person name="FitzGerald M.G."/>
            <person name="Yang X."/>
            <person name="Abouelleil A."/>
            <person name="Allen N.R."/>
            <person name="Anderson S."/>
            <person name="Bloom T."/>
            <person name="Bugalter B."/>
            <person name="Butler J."/>
            <person name="Cook A."/>
            <person name="DeCaprio D."/>
            <person name="Engels R."/>
            <person name="Garber M."/>
            <person name="Gnirke A."/>
            <person name="Hafez N."/>
            <person name="Hall J.L."/>
            <person name="Norman C.H."/>
            <person name="Itoh T."/>
            <person name="Jaffe D.B."/>
            <person name="Kuroki Y."/>
            <person name="Lehoczky J."/>
            <person name="Lui A."/>
            <person name="Macdonald P."/>
            <person name="Mauceli E."/>
            <person name="Mikkelsen T.S."/>
            <person name="Naylor J.W."/>
            <person name="Nicol R."/>
            <person name="Nguyen C."/>
            <person name="Noguchi H."/>
            <person name="O'Leary S.B."/>
            <person name="Piqani B."/>
            <person name="Smith C.L."/>
            <person name="Talamas J.A."/>
            <person name="Topham K."/>
            <person name="Totoki Y."/>
            <person name="Toyoda A."/>
            <person name="Wain H.M."/>
            <person name="Young S.K."/>
            <person name="Zeng Q."/>
            <person name="Zimmer A.R."/>
            <person name="Fujiyama A."/>
            <person name="Hattori M."/>
            <person name="Birren B.W."/>
            <person name="Sakaki Y."/>
            <person name="Lander E.S."/>
        </authorList>
    </citation>
    <scope>NUCLEOTIDE SEQUENCE [LARGE SCALE GENOMIC DNA]</scope>
</reference>
<reference key="3">
    <citation type="submission" date="2006-12" db="EMBL/GenBank/DDBJ databases">
        <authorList>
            <person name="Mural R.J."/>
            <person name="Istrail S."/>
            <person name="Sutton G.G."/>
            <person name="Florea L."/>
            <person name="Halpern A.L."/>
            <person name="Mobarry C.M."/>
            <person name="Lippert R."/>
            <person name="Walenz B."/>
            <person name="Shatkay H."/>
            <person name="Dew I."/>
            <person name="Miller J.R."/>
            <person name="Flanigan M.J."/>
            <person name="Edwards N.J."/>
            <person name="Bolanos R."/>
            <person name="Fasulo D."/>
            <person name="Halldorsson B.V."/>
            <person name="Hannenhalli S."/>
            <person name="Turner R."/>
            <person name="Yooseph S."/>
            <person name="Lu F."/>
            <person name="Nusskern D.R."/>
            <person name="Shue B.C."/>
            <person name="Zheng X.H."/>
            <person name="Zhong F."/>
            <person name="Delcher A.L."/>
            <person name="Huson D.H."/>
            <person name="Kravitz S.A."/>
            <person name="Mouchard L."/>
            <person name="Reinert K."/>
            <person name="Remington K.A."/>
            <person name="Clark A.G."/>
            <person name="Waterman M.S."/>
            <person name="Eichler E.E."/>
            <person name="Adams M.D."/>
            <person name="Hunkapiller M.W."/>
            <person name="Myers E.W."/>
            <person name="Venter J.C."/>
        </authorList>
    </citation>
    <scope>NUCLEOTIDE SEQUENCE [LARGE SCALE GENOMIC DNA]</scope>
</reference>
<reference key="4">
    <citation type="journal article" date="2004" name="Genome Res.">
        <title>The status, quality, and expansion of the NIH full-length cDNA project: the Mammalian Gene Collection (MGC).</title>
        <authorList>
            <consortium name="The MGC Project Team"/>
        </authorList>
    </citation>
    <scope>NUCLEOTIDE SEQUENCE [LARGE SCALE MRNA] (ISOFORM 4)</scope>
    <scope>NUCLEOTIDE SEQUENCE [LARGE SCALE MRNA] OF 88-961 (ISOFORM 1)</scope>
    <source>
        <tissue>Colon</tissue>
        <tissue>Lymph</tissue>
        <tissue>Ovary</tissue>
    </source>
</reference>
<reference key="5">
    <citation type="journal article" date="1998" name="J. Biol. Chem.">
        <title>FCP1, the RAP74-interacting subunit of a human protein phosphatase that dephosphorylates the carboxyl-terminal domain of RNA polymerase IIO.</title>
        <authorList>
            <person name="Archambault J."/>
            <person name="Pan G."/>
            <person name="Dahmus G.K."/>
            <person name="Cartier M."/>
            <person name="Marshall N."/>
            <person name="Zhang S."/>
            <person name="Dahmus M.E."/>
            <person name="Greenblatt J."/>
        </authorList>
    </citation>
    <scope>NUCLEOTIDE SEQUENCE [MRNA] OF 106-961 (ISOFORM 1)</scope>
    <scope>NUCLEOTIDE SEQUENCE [MRNA] OF 106-961 (ISOFORM 4)</scope>
    <scope>TISSUE SPECIFICITY</scope>
    <scope>INTERACTION WITH GTF2F1</scope>
    <source>
        <tissue>Placenta</tissue>
    </source>
</reference>
<reference key="6">
    <citation type="journal article" date="2003" name="Nucleic Acids Res.">
        <title>The FCP1 phosphatase interacts with RNA polymerase II and with MEP50 a component of the methylosome complex involved in the assembly of snRNP.</title>
        <authorList>
            <person name="Licciardo P."/>
            <person name="Amente S."/>
            <person name="Ruggiero L."/>
            <person name="Monti M."/>
            <person name="Pucci P."/>
            <person name="Lania L."/>
            <person name="Majello B."/>
        </authorList>
    </citation>
    <scope>INTERACTION WITH WDR77; SNRPB AND SNRNP70</scope>
</reference>
<reference key="7">
    <citation type="journal article" date="2003" name="Proc. Natl. Acad. Sci. U.S.A.">
        <title>The C-terminal domain phosphatase and transcription elongation activities of FCP1 are regulated by phosphorylation.</title>
        <authorList>
            <person name="Friedl E.M."/>
            <person name="Lane W.S."/>
            <person name="Erdjument-Bromage H."/>
            <person name="Tempst P."/>
            <person name="Reinberg D."/>
        </authorList>
    </citation>
    <scope>PHOSPHORYLATION</scope>
</reference>
<reference key="8">
    <citation type="journal article" date="2006" name="Cell">
        <title>Global, in vivo, and site-specific phosphorylation dynamics in signaling networks.</title>
        <authorList>
            <person name="Olsen J.V."/>
            <person name="Blagoev B."/>
            <person name="Gnad F."/>
            <person name="Macek B."/>
            <person name="Kumar C."/>
            <person name="Mortensen P."/>
            <person name="Mann M."/>
        </authorList>
    </citation>
    <scope>PHOSPHORYLATION [LARGE SCALE ANALYSIS] AT SER-869</scope>
    <scope>IDENTIFICATION BY MASS SPECTROMETRY [LARGE SCALE ANALYSIS]</scope>
    <source>
        <tissue>Cervix carcinoma</tissue>
    </source>
</reference>
<reference key="9">
    <citation type="journal article" date="2008" name="Proc. Natl. Acad. Sci. U.S.A.">
        <title>A quantitative atlas of mitotic phosphorylation.</title>
        <authorList>
            <person name="Dephoure N."/>
            <person name="Zhou C."/>
            <person name="Villen J."/>
            <person name="Beausoleil S.A."/>
            <person name="Bakalarski C.E."/>
            <person name="Elledge S.J."/>
            <person name="Gygi S.P."/>
        </authorList>
    </citation>
    <scope>IDENTIFICATION BY MASS SPECTROMETRY [LARGE SCALE ANALYSIS]</scope>
    <source>
        <tissue>Cervix carcinoma</tissue>
    </source>
</reference>
<reference key="10">
    <citation type="journal article" date="2009" name="Science">
        <title>Lysine acetylation targets protein complexes and co-regulates major cellular functions.</title>
        <authorList>
            <person name="Choudhary C."/>
            <person name="Kumar C."/>
            <person name="Gnad F."/>
            <person name="Nielsen M.L."/>
            <person name="Rehman M."/>
            <person name="Walther T.C."/>
            <person name="Olsen J.V."/>
            <person name="Mann M."/>
        </authorList>
    </citation>
    <scope>ACETYLATION [LARGE SCALE ANALYSIS] AT LYS-780</scope>
    <scope>IDENTIFICATION BY MASS SPECTROMETRY [LARGE SCALE ANALYSIS]</scope>
</reference>
<reference key="11">
    <citation type="journal article" date="2010" name="Sci. Signal.">
        <title>Quantitative phosphoproteomics reveals widespread full phosphorylation site occupancy during mitosis.</title>
        <authorList>
            <person name="Olsen J.V."/>
            <person name="Vermeulen M."/>
            <person name="Santamaria A."/>
            <person name="Kumar C."/>
            <person name="Miller M.L."/>
            <person name="Jensen L.J."/>
            <person name="Gnad F."/>
            <person name="Cox J."/>
            <person name="Jensen T.S."/>
            <person name="Nigg E.A."/>
            <person name="Brunak S."/>
            <person name="Mann M."/>
        </authorList>
    </citation>
    <scope>PHOSPHORYLATION [LARGE SCALE ANALYSIS] AT SER-674; SER-869 AND SER-872</scope>
    <scope>IDENTIFICATION BY MASS SPECTROMETRY [LARGE SCALE ANALYSIS]</scope>
    <source>
        <tissue>Cervix carcinoma</tissue>
    </source>
</reference>
<reference key="12">
    <citation type="journal article" date="2011" name="BMC Syst. Biol.">
        <title>Initial characterization of the human central proteome.</title>
        <authorList>
            <person name="Burkard T.R."/>
            <person name="Planyavsky M."/>
            <person name="Kaupe I."/>
            <person name="Breitwieser F.P."/>
            <person name="Buerckstuemmer T."/>
            <person name="Bennett K.L."/>
            <person name="Superti-Furga G."/>
            <person name="Colinge J."/>
        </authorList>
    </citation>
    <scope>IDENTIFICATION BY MASS SPECTROMETRY [LARGE SCALE ANALYSIS]</scope>
</reference>
<reference key="13">
    <citation type="journal article" date="2011" name="Sci. Signal.">
        <title>System-wide temporal characterization of the proteome and phosphoproteome of human embryonic stem cell differentiation.</title>
        <authorList>
            <person name="Rigbolt K.T."/>
            <person name="Prokhorova T.A."/>
            <person name="Akimov V."/>
            <person name="Henningsen J."/>
            <person name="Johansen P.T."/>
            <person name="Kratchmarova I."/>
            <person name="Kassem M."/>
            <person name="Mann M."/>
            <person name="Olsen J.V."/>
            <person name="Blagoev B."/>
        </authorList>
    </citation>
    <scope>PHOSPHORYLATION [LARGE SCALE ANALYSIS] AT SER-872</scope>
    <scope>IDENTIFICATION BY MASS SPECTROMETRY [LARGE SCALE ANALYSIS]</scope>
</reference>
<reference key="14">
    <citation type="journal article" date="2012" name="Nat. Commun.">
        <title>Fcp1-dependent dephosphorylation is required for M-phase-promoting factor inactivation at mitosis exit.</title>
        <authorList>
            <person name="Visconti R."/>
            <person name="Palazzo L."/>
            <person name="Della Monica R."/>
            <person name="Grieco D."/>
        </authorList>
    </citation>
    <scope>FUNCTION</scope>
    <scope>SUBCELLULAR LOCATION</scope>
</reference>
<reference key="15">
    <citation type="journal article" date="2012" name="Proc. Natl. Acad. Sci. U.S.A.">
        <title>N-terminal acetylome analyses and functional insights of the N-terminal acetyltransferase NatB.</title>
        <authorList>
            <person name="Van Damme P."/>
            <person name="Lasa M."/>
            <person name="Polevoda B."/>
            <person name="Gazquez C."/>
            <person name="Elosegui-Artola A."/>
            <person name="Kim D.S."/>
            <person name="De Juan-Pardo E."/>
            <person name="Demeyer K."/>
            <person name="Hole K."/>
            <person name="Larrea E."/>
            <person name="Timmerman E."/>
            <person name="Prieto J."/>
            <person name="Arnesen T."/>
            <person name="Sherman F."/>
            <person name="Gevaert K."/>
            <person name="Aldabe R."/>
        </authorList>
    </citation>
    <scope>ACETYLATION [LARGE SCALE ANALYSIS] AT MET-1</scope>
    <scope>IDENTIFICATION BY MASS SPECTROMETRY [LARGE SCALE ANALYSIS]</scope>
</reference>
<reference key="16">
    <citation type="journal article" date="2013" name="J. Proteome Res.">
        <title>Toward a comprehensive characterization of a human cancer cell phosphoproteome.</title>
        <authorList>
            <person name="Zhou H."/>
            <person name="Di Palma S."/>
            <person name="Preisinger C."/>
            <person name="Peng M."/>
            <person name="Polat A.N."/>
            <person name="Heck A.J."/>
            <person name="Mohammed S."/>
        </authorList>
    </citation>
    <scope>PHOSPHORYLATION [LARGE SCALE ANALYSIS] AT SER-395; SER-674; SER-740 AND SER-839</scope>
    <scope>IDENTIFICATION BY MASS SPECTROMETRY [LARGE SCALE ANALYSIS]</scope>
    <source>
        <tissue>Cervix carcinoma</tissue>
        <tissue>Erythroleukemia</tissue>
    </source>
</reference>
<reference key="17">
    <citation type="journal article" date="2014" name="J. Proteomics">
        <title>An enzyme assisted RP-RPLC approach for in-depth analysis of human liver phosphoproteome.</title>
        <authorList>
            <person name="Bian Y."/>
            <person name="Song C."/>
            <person name="Cheng K."/>
            <person name="Dong M."/>
            <person name="Wang F."/>
            <person name="Huang J."/>
            <person name="Sun D."/>
            <person name="Wang L."/>
            <person name="Ye M."/>
            <person name="Zou H."/>
        </authorList>
    </citation>
    <scope>IDENTIFICATION BY MASS SPECTROMETRY [LARGE SCALE ANALYSIS]</scope>
    <source>
        <tissue>Liver</tissue>
    </source>
</reference>
<reference key="18">
    <citation type="journal article" date="2003" name="Proc. Natl. Acad. Sci. U.S.A.">
        <title>Molecular mechanism of recruitment of TFIIF-associating RNA polymerase C-terminal domain phosphatase (FCP1) by transcription factor IIF.</title>
        <authorList>
            <person name="Kamada K."/>
            <person name="Roeder R.G."/>
            <person name="Burley S.K."/>
        </authorList>
    </citation>
    <scope>X-RAY CRYSTALLOGRAPHY (2.0 ANGSTROMS) OF 944-961 IN COMPLEX WITH GTF2F1</scope>
</reference>
<reference key="19">
    <citation type="journal article" date="2003" name="Nat. Genet.">
        <title>Partial deficiency of the C-terminal-domain phosphatase of RNA polymerase II is associated with congenital cataracts facial dysmorphism neuropathy syndrome.</title>
        <authorList>
            <person name="Varon R."/>
            <person name="Gooding R."/>
            <person name="Steglich C."/>
            <person name="Marns L."/>
            <person name="Tang H."/>
            <person name="Angelicheva D."/>
            <person name="Yong K.K."/>
            <person name="Ambrugger P."/>
            <person name="Reinhold A."/>
            <person name="Morar B."/>
            <person name="Baas F."/>
            <person name="Kwa M."/>
            <person name="Tournev I."/>
            <person name="Guerguelcheva V."/>
            <person name="Kremensky I."/>
            <person name="Lochmueller H."/>
            <person name="Muellner-Eidenboeck A."/>
            <person name="Merlini L."/>
            <person name="Neumann L."/>
            <person name="Buerger J."/>
            <person name="Walter M."/>
            <person name="Swoboda K."/>
            <person name="Thomas P.K."/>
            <person name="von Moers A."/>
            <person name="Risch N."/>
            <person name="Kalaydjieva L."/>
        </authorList>
    </citation>
    <scope>INVOLVEMENT IN CCFDN</scope>
</reference>